<feature type="chain" id="PRO_0000348976" description="Heme A synthase">
    <location>
        <begin position="1"/>
        <end position="311"/>
    </location>
</feature>
<feature type="topological domain" description="Cytoplasmic" evidence="1">
    <location>
        <begin position="1"/>
        <end position="6"/>
    </location>
</feature>
<feature type="transmembrane region" description="Helical" evidence="1">
    <location>
        <begin position="7"/>
        <end position="27"/>
    </location>
</feature>
<feature type="topological domain" description="Extracellular" evidence="1">
    <location>
        <begin position="28"/>
        <end position="62"/>
    </location>
</feature>
<feature type="transmembrane region" description="Helical" evidence="1">
    <location>
        <begin position="63"/>
        <end position="83"/>
    </location>
</feature>
<feature type="topological domain" description="Cytoplasmic" evidence="1">
    <location>
        <begin position="84"/>
        <end position="91"/>
    </location>
</feature>
<feature type="transmembrane region" description="Helical" evidence="1">
    <location>
        <begin position="92"/>
        <end position="112"/>
    </location>
</feature>
<feature type="topological domain" description="Extracellular" evidence="1">
    <location>
        <begin position="113"/>
        <end position="121"/>
    </location>
</feature>
<feature type="transmembrane region" description="Helical" evidence="1">
    <location>
        <begin position="122"/>
        <end position="142"/>
    </location>
</feature>
<feature type="topological domain" description="Cytoplasmic" evidence="1">
    <location>
        <begin position="143"/>
        <end position="159"/>
    </location>
</feature>
<feature type="transmembrane region" description="Helical" evidence="1">
    <location>
        <begin position="160"/>
        <end position="180"/>
    </location>
</feature>
<feature type="topological domain" description="Extracellular" evidence="1">
    <location>
        <begin position="181"/>
        <end position="211"/>
    </location>
</feature>
<feature type="transmembrane region" description="Helical" evidence="1">
    <location>
        <begin position="212"/>
        <end position="232"/>
    </location>
</feature>
<feature type="topological domain" description="Cytoplasmic" evidence="1">
    <location>
        <begin position="233"/>
        <end position="243"/>
    </location>
</feature>
<feature type="transmembrane region" description="Helical" evidence="1">
    <location>
        <begin position="244"/>
        <end position="264"/>
    </location>
</feature>
<feature type="topological domain" description="Extracellular" evidence="1">
    <location>
        <begin position="265"/>
        <end position="271"/>
    </location>
</feature>
<feature type="transmembrane region" description="Helical" evidence="1">
    <location>
        <begin position="272"/>
        <end position="292"/>
    </location>
</feature>
<feature type="topological domain" description="Cytoplasmic" evidence="1">
    <location>
        <begin position="293"/>
        <end position="311"/>
    </location>
</feature>
<feature type="active site" evidence="1">
    <location>
        <position position="58"/>
    </location>
</feature>
<feature type="binding site" description="axial binding residue" evidence="1">
    <location>
        <position position="61"/>
    </location>
    <ligand>
        <name>heme o</name>
        <dbReference type="ChEBI" id="CHEBI:24480"/>
    </ligand>
    <ligandPart>
        <name>Fe</name>
        <dbReference type="ChEBI" id="CHEBI:18248"/>
    </ligandPart>
</feature>
<feature type="binding site" description="axial binding residue" evidence="1">
    <location>
        <position position="123"/>
    </location>
    <ligand>
        <name>heme o</name>
        <dbReference type="ChEBI" id="CHEBI:24480"/>
    </ligand>
    <ligandPart>
        <name>Fe</name>
        <dbReference type="ChEBI" id="CHEBI:18248"/>
    </ligandPart>
</feature>
<feature type="binding site" description="axial binding residue" evidence="1">
    <location>
        <position position="213"/>
    </location>
    <ligand>
        <name>heme b</name>
        <dbReference type="ChEBI" id="CHEBI:60344"/>
    </ligand>
    <ligandPart>
        <name>Fe</name>
        <dbReference type="ChEBI" id="CHEBI:18248"/>
    </ligandPart>
</feature>
<feature type="binding site" description="axial binding residue" evidence="1">
    <location>
        <position position="275"/>
    </location>
    <ligand>
        <name>heme b</name>
        <dbReference type="ChEBI" id="CHEBI:60344"/>
    </ligand>
    <ligandPart>
        <name>Fe</name>
        <dbReference type="ChEBI" id="CHEBI:18248"/>
    </ligandPart>
</feature>
<feature type="disulfide bond" description="Essential for catalytic activity" evidence="1">
    <location>
        <begin position="35"/>
        <end position="42"/>
    </location>
</feature>
<feature type="disulfide bond" evidence="1">
    <location>
        <begin position="189"/>
        <end position="195"/>
    </location>
</feature>
<keyword id="KW-1003">Cell membrane</keyword>
<keyword id="KW-1015">Disulfide bond</keyword>
<keyword id="KW-0350">Heme biosynthesis</keyword>
<keyword id="KW-0408">Iron</keyword>
<keyword id="KW-0472">Membrane</keyword>
<keyword id="KW-0479">Metal-binding</keyword>
<keyword id="KW-0560">Oxidoreductase</keyword>
<keyword id="KW-0812">Transmembrane</keyword>
<keyword id="KW-1133">Transmembrane helix</keyword>
<proteinExistence type="inferred from homology"/>
<dbReference type="EC" id="1.17.99.9" evidence="1"/>
<dbReference type="EMBL" id="AE017355">
    <property type="protein sequence ID" value="AAT60663.1"/>
    <property type="molecule type" value="Genomic_DNA"/>
</dbReference>
<dbReference type="RefSeq" id="WP_001188730.1">
    <property type="nucleotide sequence ID" value="NC_005957.1"/>
</dbReference>
<dbReference type="RefSeq" id="YP_038008.1">
    <property type="nucleotide sequence ID" value="NC_005957.1"/>
</dbReference>
<dbReference type="SMR" id="Q6HEL8"/>
<dbReference type="GeneID" id="45023833"/>
<dbReference type="KEGG" id="btk:BT9727_3689"/>
<dbReference type="PATRIC" id="fig|281309.8.peg.3927"/>
<dbReference type="HOGENOM" id="CLU_041525_3_1_9"/>
<dbReference type="UniPathway" id="UPA00269">
    <property type="reaction ID" value="UER00713"/>
</dbReference>
<dbReference type="Proteomes" id="UP000001301">
    <property type="component" value="Chromosome"/>
</dbReference>
<dbReference type="GO" id="GO:0005886">
    <property type="term" value="C:plasma membrane"/>
    <property type="evidence" value="ECO:0007669"/>
    <property type="project" value="UniProtKB-SubCell"/>
</dbReference>
<dbReference type="GO" id="GO:0046872">
    <property type="term" value="F:metal ion binding"/>
    <property type="evidence" value="ECO:0007669"/>
    <property type="project" value="UniProtKB-KW"/>
</dbReference>
<dbReference type="GO" id="GO:0016653">
    <property type="term" value="F:oxidoreductase activity, acting on NAD(P)H, heme protein as acceptor"/>
    <property type="evidence" value="ECO:0007669"/>
    <property type="project" value="InterPro"/>
</dbReference>
<dbReference type="GO" id="GO:0006784">
    <property type="term" value="P:heme A biosynthetic process"/>
    <property type="evidence" value="ECO:0007669"/>
    <property type="project" value="UniProtKB-UniRule"/>
</dbReference>
<dbReference type="HAMAP" id="MF_01664">
    <property type="entry name" value="HemeA_synth_type1"/>
    <property type="match status" value="1"/>
</dbReference>
<dbReference type="InterPro" id="IPR003780">
    <property type="entry name" value="COX15/CtaA_fam"/>
</dbReference>
<dbReference type="InterPro" id="IPR050450">
    <property type="entry name" value="COX15/CtaA_HemeA_synthase"/>
</dbReference>
<dbReference type="InterPro" id="IPR023755">
    <property type="entry name" value="HemeA_Synthase_type1"/>
</dbReference>
<dbReference type="PANTHER" id="PTHR35457">
    <property type="entry name" value="HEME A SYNTHASE"/>
    <property type="match status" value="1"/>
</dbReference>
<dbReference type="PANTHER" id="PTHR35457:SF1">
    <property type="entry name" value="HEME A SYNTHASE"/>
    <property type="match status" value="1"/>
</dbReference>
<dbReference type="Pfam" id="PF02628">
    <property type="entry name" value="COX15-CtaA"/>
    <property type="match status" value="1"/>
</dbReference>
<name>CTAA_BACHK</name>
<reference key="1">
    <citation type="journal article" date="2006" name="J. Bacteriol.">
        <title>Pathogenomic sequence analysis of Bacillus cereus and Bacillus thuringiensis isolates closely related to Bacillus anthracis.</title>
        <authorList>
            <person name="Han C.S."/>
            <person name="Xie G."/>
            <person name="Challacombe J.F."/>
            <person name="Altherr M.R."/>
            <person name="Bhotika S.S."/>
            <person name="Bruce D."/>
            <person name="Campbell C.S."/>
            <person name="Campbell M.L."/>
            <person name="Chen J."/>
            <person name="Chertkov O."/>
            <person name="Cleland C."/>
            <person name="Dimitrijevic M."/>
            <person name="Doggett N.A."/>
            <person name="Fawcett J.J."/>
            <person name="Glavina T."/>
            <person name="Goodwin L.A."/>
            <person name="Hill K.K."/>
            <person name="Hitchcock P."/>
            <person name="Jackson P.J."/>
            <person name="Keim P."/>
            <person name="Kewalramani A.R."/>
            <person name="Longmire J."/>
            <person name="Lucas S."/>
            <person name="Malfatti S."/>
            <person name="McMurry K."/>
            <person name="Meincke L.J."/>
            <person name="Misra M."/>
            <person name="Moseman B.L."/>
            <person name="Mundt M."/>
            <person name="Munk A.C."/>
            <person name="Okinaka R.T."/>
            <person name="Parson-Quintana B."/>
            <person name="Reilly L.P."/>
            <person name="Richardson P."/>
            <person name="Robinson D.L."/>
            <person name="Rubin E."/>
            <person name="Saunders E."/>
            <person name="Tapia R."/>
            <person name="Tesmer J.G."/>
            <person name="Thayer N."/>
            <person name="Thompson L.S."/>
            <person name="Tice H."/>
            <person name="Ticknor L.O."/>
            <person name="Wills P.L."/>
            <person name="Brettin T.S."/>
            <person name="Gilna P."/>
        </authorList>
    </citation>
    <scope>NUCLEOTIDE SEQUENCE [LARGE SCALE GENOMIC DNA]</scope>
    <source>
        <strain>97-27</strain>
    </source>
</reference>
<sequence length="311" mass="34625">MQRFIKWLAVITSLDLLIVLLGGALVTKTGSGQGCGKSWPLCNGEFVPSNLSMETIIELSHRLTSGSAGILVTLLCILSWKYYKHVRETKTLAILSFVFLVAQALMGAAAVVWGQMPAVLAIHFGISLISFASVILLTCLIFEIDQKFDARSLIMDKKMKFHIYGVTIYCYLVVYTGALVRHERASLACPDFPLCSKNRPMPTQLHEWVQMGHRLAAMLIFVWILYAMILAIRHYKQQPVVYWGWIISFILVTLQAIVGILVVFTNASLAMALLHSLFISCLFAVLCYLVMLGTRSKVNAKEAASTSKQTK</sequence>
<accession>Q6HEL8</accession>
<comment type="function">
    <text evidence="1">Catalyzes the conversion of heme O to heme A by two successive hydroxylations of the methyl group at C8. The first hydroxylation forms heme I, the second hydroxylation results in an unstable dihydroxymethyl group, which spontaneously dehydrates, resulting in the formyl group of heme A.</text>
</comment>
<comment type="catalytic activity">
    <reaction evidence="1">
        <text>Fe(II)-heme o + 2 A + H2O = Fe(II)-heme a + 2 AH2</text>
        <dbReference type="Rhea" id="RHEA:63388"/>
        <dbReference type="ChEBI" id="CHEBI:13193"/>
        <dbReference type="ChEBI" id="CHEBI:15377"/>
        <dbReference type="ChEBI" id="CHEBI:17499"/>
        <dbReference type="ChEBI" id="CHEBI:60530"/>
        <dbReference type="ChEBI" id="CHEBI:61715"/>
        <dbReference type="EC" id="1.17.99.9"/>
    </reaction>
    <physiologicalReaction direction="left-to-right" evidence="1">
        <dbReference type="Rhea" id="RHEA:63389"/>
    </physiologicalReaction>
</comment>
<comment type="cofactor">
    <cofactor evidence="1">
        <name>heme b</name>
        <dbReference type="ChEBI" id="CHEBI:60344"/>
    </cofactor>
</comment>
<comment type="pathway">
    <text evidence="1">Porphyrin-containing compound metabolism; heme A biosynthesis; heme A from heme O: step 1/1.</text>
</comment>
<comment type="subunit">
    <text evidence="1">Interacts with CtaB.</text>
</comment>
<comment type="subcellular location">
    <subcellularLocation>
        <location evidence="1">Cell membrane</location>
        <topology evidence="1">Multi-pass membrane protein</topology>
    </subcellularLocation>
</comment>
<comment type="domain">
    <text evidence="1">The N-half (TM1-TM4) and C-half (TM5-TM8) domains are connected by an intracellular loop. Each domain is formed from four-helix bundles and they align in a pseudo twofold symmetry manner. The N-half domain is the substrate-heme O binding domain and the C-half domain is the cofactor heme B binding domain.</text>
</comment>
<comment type="domain">
    <text evidence="1">The cysteines of disulfide bond Cys-35 and Cys-42 may be involved in transfer of reducing equivalents from quinol in the membrane to the active site of the enzyme.</text>
</comment>
<comment type="similarity">
    <text evidence="1">Belongs to the COX15/CtaA family. Type 1 subfamily.</text>
</comment>
<protein>
    <recommendedName>
        <fullName evidence="1">Heme A synthase</fullName>
        <shortName evidence="1">HAS</shortName>
        <ecNumber evidence="1">1.17.99.9</ecNumber>
    </recommendedName>
    <alternativeName>
        <fullName evidence="1">Cytochrome aa3-controlling protein</fullName>
    </alternativeName>
</protein>
<gene>
    <name evidence="1" type="primary">ctaA</name>
    <name type="ordered locus">BT9727_3689</name>
</gene>
<evidence type="ECO:0000255" key="1">
    <source>
        <dbReference type="HAMAP-Rule" id="MF_01664"/>
    </source>
</evidence>
<organism>
    <name type="scientific">Bacillus thuringiensis subsp. konkukian (strain 97-27)</name>
    <dbReference type="NCBI Taxonomy" id="281309"/>
    <lineage>
        <taxon>Bacteria</taxon>
        <taxon>Bacillati</taxon>
        <taxon>Bacillota</taxon>
        <taxon>Bacilli</taxon>
        <taxon>Bacillales</taxon>
        <taxon>Bacillaceae</taxon>
        <taxon>Bacillus</taxon>
        <taxon>Bacillus cereus group</taxon>
    </lineage>
</organism>